<reference key="1">
    <citation type="journal article" date="1990" name="J. Bacteriol.">
        <title>Molecular cloning of the protocatechuate 4,5-dioxygenase genes of Pseudomonas paucimobilis.</title>
        <authorList>
            <person name="Noda Y."/>
            <person name="Nishikawa S."/>
            <person name="Shiozuka K."/>
            <person name="Kadokura H."/>
            <person name="Nakajima H."/>
            <person name="Yoda K."/>
            <person name="Katayama Y."/>
            <person name="Morohoshi N."/>
            <person name="Haraguchi T."/>
            <person name="Yamasaki M."/>
        </authorList>
    </citation>
    <scope>NUCLEOTIDE SEQUENCE [GENOMIC DNA]</scope>
    <scope>PROTEIN SEQUENCE OF 1-9</scope>
    <source>
        <strain>NBRC 103272 / SYK-6</strain>
    </source>
</reference>
<protein>
    <recommendedName>
        <fullName>Protocatechuate 4,5-dioxygenase beta chain</fullName>
        <ecNumber>1.13.11.8</ecNumber>
    </recommendedName>
    <alternativeName>
        <fullName>4,5-PCD</fullName>
    </alternativeName>
</protein>
<name>PCYB_SPHSK</name>
<keyword id="KW-0002">3D-structure</keyword>
<keyword id="KW-0058">Aromatic hydrocarbons catabolism</keyword>
<keyword id="KW-0223">Dioxygenase</keyword>
<keyword id="KW-0903">Direct protein sequencing</keyword>
<keyword id="KW-0408">Iron</keyword>
<keyword id="KW-0560">Oxidoreductase</keyword>
<organism>
    <name type="scientific">Sphingobium sp. (strain NBRC 103272 / SYK-6)</name>
    <dbReference type="NCBI Taxonomy" id="627192"/>
    <lineage>
        <taxon>Bacteria</taxon>
        <taxon>Pseudomonadati</taxon>
        <taxon>Pseudomonadota</taxon>
        <taxon>Alphaproteobacteria</taxon>
        <taxon>Sphingomonadales</taxon>
        <taxon>Sphingomonadaceae</taxon>
        <taxon>Sphingobium</taxon>
    </lineage>
</organism>
<feature type="chain" id="PRO_0000085101" description="Protocatechuate 4,5-dioxygenase beta chain">
    <location>
        <begin position="1"/>
        <end position="302"/>
    </location>
</feature>
<feature type="strand" evidence="1">
    <location>
        <begin position="3"/>
        <end position="10"/>
    </location>
</feature>
<feature type="helix" evidence="1">
    <location>
        <begin position="14"/>
        <end position="21"/>
    </location>
</feature>
<feature type="turn" evidence="1">
    <location>
        <begin position="28"/>
        <end position="30"/>
    </location>
</feature>
<feature type="helix" evidence="1">
    <location>
        <begin position="31"/>
        <end position="44"/>
    </location>
</feature>
<feature type="turn" evidence="1">
    <location>
        <begin position="47"/>
        <end position="49"/>
    </location>
</feature>
<feature type="strand" evidence="1">
    <location>
        <begin position="52"/>
        <end position="58"/>
    </location>
</feature>
<feature type="strand" evidence="1">
    <location>
        <begin position="62"/>
        <end position="64"/>
    </location>
</feature>
<feature type="strand" evidence="1">
    <location>
        <begin position="69"/>
        <end position="76"/>
    </location>
</feature>
<feature type="strand" evidence="1">
    <location>
        <begin position="78"/>
        <end position="81"/>
    </location>
</feature>
<feature type="strand" evidence="1">
    <location>
        <begin position="87"/>
        <end position="90"/>
    </location>
</feature>
<feature type="helix" evidence="1">
    <location>
        <begin position="100"/>
        <end position="112"/>
    </location>
</feature>
<feature type="strand" evidence="1">
    <location>
        <begin position="118"/>
        <end position="122"/>
    </location>
</feature>
<feature type="helix" evidence="1">
    <location>
        <begin position="127"/>
        <end position="137"/>
    </location>
</feature>
<feature type="strand" evidence="1">
    <location>
        <begin position="144"/>
        <end position="152"/>
    </location>
</feature>
<feature type="strand" evidence="1">
    <location>
        <begin position="155"/>
        <end position="157"/>
    </location>
</feature>
<feature type="helix" evidence="1">
    <location>
        <begin position="162"/>
        <end position="177"/>
    </location>
</feature>
<feature type="strand" evidence="1">
    <location>
        <begin position="179"/>
        <end position="181"/>
    </location>
</feature>
<feature type="strand" evidence="1">
    <location>
        <begin position="184"/>
        <end position="190"/>
    </location>
</feature>
<feature type="turn" evidence="1">
    <location>
        <begin position="200"/>
        <end position="203"/>
    </location>
</feature>
<feature type="helix" evidence="1">
    <location>
        <begin position="207"/>
        <end position="219"/>
    </location>
</feature>
<feature type="helix" evidence="1">
    <location>
        <begin position="221"/>
        <end position="224"/>
    </location>
</feature>
<feature type="helix" evidence="1">
    <location>
        <begin position="229"/>
        <end position="236"/>
    </location>
</feature>
<feature type="helix" evidence="1">
    <location>
        <begin position="240"/>
        <end position="243"/>
    </location>
</feature>
<feature type="helix" evidence="1">
    <location>
        <begin position="244"/>
        <end position="251"/>
    </location>
</feature>
<feature type="strand" evidence="1">
    <location>
        <begin position="257"/>
        <end position="268"/>
    </location>
</feature>
<feature type="strand" evidence="1">
    <location>
        <begin position="271"/>
        <end position="280"/>
    </location>
</feature>
<feature type="helix" evidence="1">
    <location>
        <begin position="281"/>
        <end position="283"/>
    </location>
</feature>
<feature type="strand" evidence="1">
    <location>
        <begin position="289"/>
        <end position="296"/>
    </location>
</feature>
<gene>
    <name type="primary">ligB</name>
</gene>
<dbReference type="EC" id="1.13.11.8"/>
<dbReference type="EMBL" id="M34835">
    <property type="protein sequence ID" value="AAA17728.1"/>
    <property type="molecule type" value="Unassigned_DNA"/>
</dbReference>
<dbReference type="PIR" id="B35271">
    <property type="entry name" value="B35271"/>
</dbReference>
<dbReference type="PDB" id="1B4U">
    <property type="method" value="X-ray"/>
    <property type="resolution" value="2.20 A"/>
    <property type="chains" value="B/D=1-302"/>
</dbReference>
<dbReference type="PDB" id="1BOU">
    <property type="method" value="X-ray"/>
    <property type="resolution" value="2.20 A"/>
    <property type="chains" value="B/D=1-302"/>
</dbReference>
<dbReference type="PDBsum" id="1B4U"/>
<dbReference type="PDBsum" id="1BOU"/>
<dbReference type="SMR" id="P22636"/>
<dbReference type="IntAct" id="P22636">
    <property type="interactions" value="1"/>
</dbReference>
<dbReference type="STRING" id="627192.SLG_12500"/>
<dbReference type="KEGG" id="ag:AAA17728"/>
<dbReference type="BioCyc" id="MetaCyc:MONOMER-15117"/>
<dbReference type="EvolutionaryTrace" id="P22636"/>
<dbReference type="GO" id="GO:0008198">
    <property type="term" value="F:ferrous iron binding"/>
    <property type="evidence" value="ECO:0007669"/>
    <property type="project" value="InterPro"/>
</dbReference>
<dbReference type="GO" id="GO:0018579">
    <property type="term" value="F:protocatechuate 4,5-dioxygenase activity"/>
    <property type="evidence" value="ECO:0007669"/>
    <property type="project" value="UniProtKB-EC"/>
</dbReference>
<dbReference type="GO" id="GO:0009056">
    <property type="term" value="P:catabolic process"/>
    <property type="evidence" value="ECO:0007669"/>
    <property type="project" value="UniProtKB-KW"/>
</dbReference>
<dbReference type="CDD" id="cd07364">
    <property type="entry name" value="PCA_45_Dioxygenase_B"/>
    <property type="match status" value="1"/>
</dbReference>
<dbReference type="Gene3D" id="3.40.830.10">
    <property type="entry name" value="LigB-like"/>
    <property type="match status" value="1"/>
</dbReference>
<dbReference type="InterPro" id="IPR034937">
    <property type="entry name" value="PCA_45_Dioxygenase_B"/>
</dbReference>
<dbReference type="InterPro" id="IPR004183">
    <property type="entry name" value="Xdiol_dOase_suB"/>
</dbReference>
<dbReference type="NCBIfam" id="NF009901">
    <property type="entry name" value="PRK13364.1"/>
    <property type="match status" value="1"/>
</dbReference>
<dbReference type="NCBIfam" id="NF009902">
    <property type="entry name" value="PRK13365.1"/>
    <property type="match status" value="1"/>
</dbReference>
<dbReference type="NCBIfam" id="NF009903">
    <property type="entry name" value="PRK13366.1"/>
    <property type="match status" value="1"/>
</dbReference>
<dbReference type="Pfam" id="PF02900">
    <property type="entry name" value="LigB"/>
    <property type="match status" value="1"/>
</dbReference>
<dbReference type="SUPFAM" id="SSF53213">
    <property type="entry name" value="LigB-like"/>
    <property type="match status" value="1"/>
</dbReference>
<evidence type="ECO:0007829" key="1">
    <source>
        <dbReference type="PDB" id="1B4U"/>
    </source>
</evidence>
<proteinExistence type="evidence at protein level"/>
<accession>P22636</accession>
<sequence>MARVTTGITSSHIPALGAAIQTGTSDNDYWGPVFKGYQPIRDWIKQPGNMPDVVILVYNDHASAFDMNIIPTFAIGCAETFKPADEGWGPRPVPDVKGHPDLAWHIAQSLILDEFDMTIMNQMDVDHGCTVPLSMIFGEPEEWPCKVIPFPVNVVTYPPPSGKRCFALGDSIRAAVESFPEDLNVHVWGTGGMSHQLQGPRAGLINKEFDLNFIDKLISDPEELSKMPHIQYLRESGSEGVELVMWLIMRGALPEKVRDLYTFYHIPASNTALGAMILQPEETAGTPLEPRKVMSGHSLAQA</sequence>
<comment type="function">
    <text>Responsible for the aromatic ring fission of protocatechuate.</text>
</comment>
<comment type="catalytic activity">
    <reaction>
        <text>3,4-dihydroxybenzoate + O2 = 4-carboxy-2-hydroxy-cis,cis-muconate 6-semialdehyde + H(+)</text>
        <dbReference type="Rhea" id="RHEA:24044"/>
        <dbReference type="ChEBI" id="CHEBI:15378"/>
        <dbReference type="ChEBI" id="CHEBI:15379"/>
        <dbReference type="ChEBI" id="CHEBI:36241"/>
        <dbReference type="ChEBI" id="CHEBI:58358"/>
        <dbReference type="EC" id="1.13.11.8"/>
    </reaction>
</comment>
<comment type="cofactor">
    <cofactor>
        <name>Fe(2+)</name>
        <dbReference type="ChEBI" id="CHEBI:29033"/>
    </cofactor>
</comment>
<comment type="subunit">
    <text>Composed of two subunits (alpha and beta) in a 1:1 ratio.</text>
</comment>